<reference key="1">
    <citation type="journal article" date="1983" name="Mol. Cell. Biol.">
        <title>DNA sequence of two linked actin genes of sea urchin.</title>
        <authorList>
            <person name="Schuler M.A."/>
            <person name="McOsker P."/>
            <person name="Keller E.B."/>
        </authorList>
    </citation>
    <scope>NUCLEOTIDE SEQUENCE [GENOMIC DNA]</scope>
</reference>
<name>ACTA_STRPU</name>
<proteinExistence type="inferred from homology"/>
<gene>
    <name type="primary">CYIA</name>
</gene>
<evidence type="ECO:0000250" key="1"/>
<evidence type="ECO:0000250" key="2">
    <source>
        <dbReference type="UniProtKB" id="P68137"/>
    </source>
</evidence>
<evidence type="ECO:0000305" key="3"/>
<feature type="propeptide" id="PRO_0000000722" description="Removed in mature form" evidence="1">
    <location>
        <begin position="1"/>
        <end position="2"/>
    </location>
</feature>
<feature type="chain" id="PRO_0000000723" description="Actin, cytoskeletal 1A">
    <location>
        <begin position="3"/>
        <end position="376"/>
    </location>
</feature>
<feature type="modified residue" description="N-acetylaspartate" evidence="1">
    <location>
        <position position="3"/>
    </location>
</feature>
<feature type="unsure residue">
    <location>
        <position position="54"/>
    </location>
</feature>
<feature type="unsure residue">
    <location>
        <position position="235"/>
    </location>
</feature>
<feature type="unsure residue">
    <location>
        <position position="236"/>
    </location>
</feature>
<feature type="unsure residue">
    <location>
        <position position="240"/>
    </location>
</feature>
<feature type="unsure residue">
    <location>
        <position position="304"/>
    </location>
</feature>
<dbReference type="EC" id="3.6.4.-" evidence="2"/>
<dbReference type="EMBL" id="J01168">
    <property type="status" value="NOT_ANNOTATED_CDS"/>
    <property type="molecule type" value="Genomic_DNA"/>
</dbReference>
<dbReference type="SMR" id="P53472"/>
<dbReference type="FunCoup" id="P53472">
    <property type="interactions" value="1849"/>
</dbReference>
<dbReference type="STRING" id="7668.P53472"/>
<dbReference type="eggNOG" id="KOG0676">
    <property type="taxonomic scope" value="Eukaryota"/>
</dbReference>
<dbReference type="HOGENOM" id="CLU_027965_0_2_1"/>
<dbReference type="InParanoid" id="P53472"/>
<dbReference type="Proteomes" id="UP000007110">
    <property type="component" value="Unassembled WGS sequence"/>
</dbReference>
<dbReference type="GO" id="GO:0005737">
    <property type="term" value="C:cytoplasm"/>
    <property type="evidence" value="ECO:0007669"/>
    <property type="project" value="UniProtKB-SubCell"/>
</dbReference>
<dbReference type="GO" id="GO:0005856">
    <property type="term" value="C:cytoskeleton"/>
    <property type="evidence" value="ECO:0007669"/>
    <property type="project" value="UniProtKB-SubCell"/>
</dbReference>
<dbReference type="GO" id="GO:0005524">
    <property type="term" value="F:ATP binding"/>
    <property type="evidence" value="ECO:0007669"/>
    <property type="project" value="UniProtKB-KW"/>
</dbReference>
<dbReference type="GO" id="GO:0016787">
    <property type="term" value="F:hydrolase activity"/>
    <property type="evidence" value="ECO:0007669"/>
    <property type="project" value="UniProtKB-KW"/>
</dbReference>
<dbReference type="CDD" id="cd10224">
    <property type="entry name" value="ASKHA_NBD_actin"/>
    <property type="match status" value="1"/>
</dbReference>
<dbReference type="FunFam" id="2.30.36.70:FF:000001">
    <property type="entry name" value="Actin, alpha skeletal muscle"/>
    <property type="match status" value="1"/>
</dbReference>
<dbReference type="FunFam" id="3.30.420.40:FF:000131">
    <property type="entry name" value="Actin, alpha skeletal muscle"/>
    <property type="match status" value="1"/>
</dbReference>
<dbReference type="FunFam" id="3.30.420.40:FF:000291">
    <property type="entry name" value="Actin, alpha skeletal muscle"/>
    <property type="match status" value="1"/>
</dbReference>
<dbReference type="FunFam" id="3.90.640.10:FF:000047">
    <property type="entry name" value="Actin, alpha skeletal muscle"/>
    <property type="match status" value="1"/>
</dbReference>
<dbReference type="FunFam" id="3.30.420.40:FF:000058">
    <property type="entry name" value="Putative actin-related protein 5"/>
    <property type="match status" value="1"/>
</dbReference>
<dbReference type="Gene3D" id="3.30.420.40">
    <property type="match status" value="2"/>
</dbReference>
<dbReference type="Gene3D" id="3.90.640.10">
    <property type="entry name" value="Actin, Chain A, domain 4"/>
    <property type="match status" value="1"/>
</dbReference>
<dbReference type="InterPro" id="IPR004000">
    <property type="entry name" value="Actin"/>
</dbReference>
<dbReference type="InterPro" id="IPR020902">
    <property type="entry name" value="Actin/actin-like_CS"/>
</dbReference>
<dbReference type="InterPro" id="IPR004001">
    <property type="entry name" value="Actin_CS"/>
</dbReference>
<dbReference type="InterPro" id="IPR043129">
    <property type="entry name" value="ATPase_NBD"/>
</dbReference>
<dbReference type="PANTHER" id="PTHR11937">
    <property type="entry name" value="ACTIN"/>
    <property type="match status" value="1"/>
</dbReference>
<dbReference type="Pfam" id="PF00022">
    <property type="entry name" value="Actin"/>
    <property type="match status" value="1"/>
</dbReference>
<dbReference type="PRINTS" id="PR00190">
    <property type="entry name" value="ACTIN"/>
</dbReference>
<dbReference type="SMART" id="SM00268">
    <property type="entry name" value="ACTIN"/>
    <property type="match status" value="1"/>
</dbReference>
<dbReference type="SUPFAM" id="SSF53067">
    <property type="entry name" value="Actin-like ATPase domain"/>
    <property type="match status" value="2"/>
</dbReference>
<dbReference type="PROSITE" id="PS00406">
    <property type="entry name" value="ACTINS_1"/>
    <property type="match status" value="1"/>
</dbReference>
<dbReference type="PROSITE" id="PS00432">
    <property type="entry name" value="ACTINS_2"/>
    <property type="match status" value="1"/>
</dbReference>
<dbReference type="PROSITE" id="PS01132">
    <property type="entry name" value="ACTINS_ACT_LIKE"/>
    <property type="match status" value="1"/>
</dbReference>
<accession>P53472</accession>
<organism>
    <name type="scientific">Strongylocentrotus purpuratus</name>
    <name type="common">Purple sea urchin</name>
    <dbReference type="NCBI Taxonomy" id="7668"/>
    <lineage>
        <taxon>Eukaryota</taxon>
        <taxon>Metazoa</taxon>
        <taxon>Echinodermata</taxon>
        <taxon>Eleutherozoa</taxon>
        <taxon>Echinozoa</taxon>
        <taxon>Echinoidea</taxon>
        <taxon>Euechinoidea</taxon>
        <taxon>Echinacea</taxon>
        <taxon>Camarodonta</taxon>
        <taxon>Echinidea</taxon>
        <taxon>Strongylocentrotidae</taxon>
        <taxon>Strongylocentrotus</taxon>
    </lineage>
</organism>
<comment type="function">
    <text>Actins are highly conserved proteins that are involved in various types of cell motility and are ubiquitously expressed in all eukaryotic cells.</text>
</comment>
<comment type="catalytic activity">
    <reaction evidence="2">
        <text>ATP + H2O = ADP + phosphate + H(+)</text>
        <dbReference type="Rhea" id="RHEA:13065"/>
        <dbReference type="ChEBI" id="CHEBI:15377"/>
        <dbReference type="ChEBI" id="CHEBI:15378"/>
        <dbReference type="ChEBI" id="CHEBI:30616"/>
        <dbReference type="ChEBI" id="CHEBI:43474"/>
        <dbReference type="ChEBI" id="CHEBI:456216"/>
    </reaction>
</comment>
<comment type="subcellular location">
    <subcellularLocation>
        <location>Cytoplasm</location>
    </subcellularLocation>
    <subcellularLocation>
        <location>Cytoplasm</location>
        <location>Cytoskeleton</location>
    </subcellularLocation>
</comment>
<comment type="similarity">
    <text evidence="3">Belongs to the actin family.</text>
</comment>
<keyword id="KW-0007">Acetylation</keyword>
<keyword id="KW-0067">ATP-binding</keyword>
<keyword id="KW-0963">Cytoplasm</keyword>
<keyword id="KW-0206">Cytoskeleton</keyword>
<keyword id="KW-0378">Hydrolase</keyword>
<keyword id="KW-0547">Nucleotide-binding</keyword>
<keyword id="KW-1185">Reference proteome</keyword>
<sequence length="376" mass="41849">MCDDDVAALVIDNGSGMVKAGFAGDDAPRAVFPSIVGRPRHQGVMVGMGQKDSYVGDEAQSKRGILTLKYPMEHGIVTNWDDMEKIWHHTFYNELRVAPEEHPVLLTEAPLNPKANREKMTQIMFETFNSPAMYVAIQAVLSLYASGRTTGIVFDSGDGVSHTVPIYEGYALPHAILRLDLAGRDLTDYLMKILTERGYSFTTTAEREIVRDIKEKLCYVALDFEQEMQTAASSSSLEKSYELPDGQVITIGNERFRCPEALFQPAFLGMESAGIHETCYNSIMKCDVDIRKDLYANTVLSGGSTMFPGIADRMQKEITALAPPTMKIKIIAPPERKYSVWIGGSILASLSTFQQMWISKQEYDESGPSIVHRKCF</sequence>
<protein>
    <recommendedName>
        <fullName>Actin, cytoskeletal 1A</fullName>
        <ecNumber evidence="2">3.6.4.-</ecNumber>
    </recommendedName>
    <alternativeName>
        <fullName>Actin, cytoskeletal IA</fullName>
    </alternativeName>
</protein>